<name>ASSY_LACLM</name>
<reference key="1">
    <citation type="journal article" date="2007" name="J. Bacteriol.">
        <title>The complete genome sequence of the lactic acid bacterial paradigm Lactococcus lactis subsp. cremoris MG1363.</title>
        <authorList>
            <person name="Wegmann U."/>
            <person name="O'Connell-Motherway M."/>
            <person name="Zomer A."/>
            <person name="Buist G."/>
            <person name="Shearman C."/>
            <person name="Canchaya C."/>
            <person name="Ventura M."/>
            <person name="Goesmann A."/>
            <person name="Gasson M.J."/>
            <person name="Kuipers O.P."/>
            <person name="van Sinderen D."/>
            <person name="Kok J."/>
        </authorList>
    </citation>
    <scope>NUCLEOTIDE SEQUENCE [LARGE SCALE GENOMIC DNA]</scope>
    <source>
        <strain>MG1363</strain>
    </source>
</reference>
<reference key="2">
    <citation type="journal article" date="1995" name="Mol. Microbiol.">
        <title>Isolation of Lactococcus lactis nonsense suppressors and construction of a food-grade cloning vector.</title>
        <authorList>
            <person name="Dickely F."/>
            <person name="Nilsson D."/>
            <person name="Hansen E.B."/>
            <person name="Johansen E."/>
        </authorList>
    </citation>
    <scope>NUCLEOTIDE SEQUENCE [GENOMIC DNA] OF 1-61</scope>
    <source>
        <strain>MG1363 / NJ1</strain>
    </source>
</reference>
<sequence length="397" mass="43827">MGNKKIVLAYSGGLDTSVAVKWLTDKGFDVIAACMDVGEGKDLNFIHDKALQVGAVESVVLDCKAEFAEIFVGAALKGNLMYENKYPLVSALSRPLIAKKLVKVAKEKGATAIAHGCTGKGNDQVRFEVAIHSLAPELEVIAPVREWHWAREEEIEYANQNGVPIPADLDNPYSIDMNLWGRAIEAGVLENPWNTCPEDAFFMTNSVEDAPNEPEFIEVEFKEGLPIALNGKIMELHEIIKEVNIIAGKHGVGRIDHIENRLVGIKSREFYECPAAITLLKAHKDLEDLTFVRELAHFKPVLENELANLIYNGLWFNPATKALIAYLDETQKVVNGIVRIKLYKGLATPIGRKSTNSLYSEKLATYTAADEFDQAAAVGFIKLWGLPTQVNAQVNLK</sequence>
<protein>
    <recommendedName>
        <fullName evidence="1">Argininosuccinate synthase</fullName>
        <ecNumber evidence="1">6.3.4.5</ecNumber>
    </recommendedName>
    <alternativeName>
        <fullName evidence="1">Citrulline--aspartate ligase</fullName>
    </alternativeName>
</protein>
<dbReference type="EC" id="6.3.4.5" evidence="1"/>
<dbReference type="EMBL" id="AM406671">
    <property type="protein sequence ID" value="CAL96745.1"/>
    <property type="status" value="ALT_INIT"/>
    <property type="molecule type" value="Genomic_DNA"/>
</dbReference>
<dbReference type="EMBL" id="L35276">
    <property type="protein sequence ID" value="AAB59098.1"/>
    <property type="molecule type" value="Genomic_DNA"/>
</dbReference>
<dbReference type="PIR" id="S61909">
    <property type="entry name" value="S61909"/>
</dbReference>
<dbReference type="RefSeq" id="WP_014734903.1">
    <property type="nucleotide sequence ID" value="NC_009004.1"/>
</dbReference>
<dbReference type="SMR" id="Q59491"/>
<dbReference type="STRING" id="416870.llmg_0138"/>
<dbReference type="KEGG" id="llm:llmg_0138"/>
<dbReference type="eggNOG" id="COG0137">
    <property type="taxonomic scope" value="Bacteria"/>
</dbReference>
<dbReference type="HOGENOM" id="CLU_032784_4_2_9"/>
<dbReference type="OrthoDB" id="9801641at2"/>
<dbReference type="UniPathway" id="UPA00068">
    <property type="reaction ID" value="UER00113"/>
</dbReference>
<dbReference type="Proteomes" id="UP000000364">
    <property type="component" value="Chromosome"/>
</dbReference>
<dbReference type="GO" id="GO:0005737">
    <property type="term" value="C:cytoplasm"/>
    <property type="evidence" value="ECO:0007669"/>
    <property type="project" value="UniProtKB-SubCell"/>
</dbReference>
<dbReference type="GO" id="GO:0004055">
    <property type="term" value="F:argininosuccinate synthase activity"/>
    <property type="evidence" value="ECO:0007669"/>
    <property type="project" value="UniProtKB-UniRule"/>
</dbReference>
<dbReference type="GO" id="GO:0005524">
    <property type="term" value="F:ATP binding"/>
    <property type="evidence" value="ECO:0007669"/>
    <property type="project" value="UniProtKB-UniRule"/>
</dbReference>
<dbReference type="GO" id="GO:0000053">
    <property type="term" value="P:argininosuccinate metabolic process"/>
    <property type="evidence" value="ECO:0007669"/>
    <property type="project" value="TreeGrafter"/>
</dbReference>
<dbReference type="GO" id="GO:0006526">
    <property type="term" value="P:L-arginine biosynthetic process"/>
    <property type="evidence" value="ECO:0007669"/>
    <property type="project" value="UniProtKB-UniRule"/>
</dbReference>
<dbReference type="GO" id="GO:0000050">
    <property type="term" value="P:urea cycle"/>
    <property type="evidence" value="ECO:0007669"/>
    <property type="project" value="TreeGrafter"/>
</dbReference>
<dbReference type="CDD" id="cd01999">
    <property type="entry name" value="ASS"/>
    <property type="match status" value="1"/>
</dbReference>
<dbReference type="FunFam" id="1.20.5.470:FF:000002">
    <property type="entry name" value="Argininosuccinate synthase"/>
    <property type="match status" value="1"/>
</dbReference>
<dbReference type="FunFam" id="3.40.50.620:FF:000038">
    <property type="entry name" value="Argininosuccinate synthase"/>
    <property type="match status" value="1"/>
</dbReference>
<dbReference type="FunFam" id="3.90.1260.10:FF:000007">
    <property type="entry name" value="Argininosuccinate synthase"/>
    <property type="match status" value="1"/>
</dbReference>
<dbReference type="Gene3D" id="3.90.1260.10">
    <property type="entry name" value="Argininosuccinate synthetase, chain A, domain 2"/>
    <property type="match status" value="1"/>
</dbReference>
<dbReference type="Gene3D" id="3.40.50.620">
    <property type="entry name" value="HUPs"/>
    <property type="match status" value="1"/>
</dbReference>
<dbReference type="Gene3D" id="1.20.5.470">
    <property type="entry name" value="Single helix bin"/>
    <property type="match status" value="1"/>
</dbReference>
<dbReference type="HAMAP" id="MF_00005">
    <property type="entry name" value="Arg_succ_synth_type1"/>
    <property type="match status" value="1"/>
</dbReference>
<dbReference type="InterPro" id="IPR048268">
    <property type="entry name" value="Arginosuc_syn_C"/>
</dbReference>
<dbReference type="InterPro" id="IPR048267">
    <property type="entry name" value="Arginosuc_syn_N"/>
</dbReference>
<dbReference type="InterPro" id="IPR001518">
    <property type="entry name" value="Arginosuc_synth"/>
</dbReference>
<dbReference type="InterPro" id="IPR018223">
    <property type="entry name" value="Arginosuc_synth_CS"/>
</dbReference>
<dbReference type="InterPro" id="IPR023434">
    <property type="entry name" value="Arginosuc_synth_type_1_subfam"/>
</dbReference>
<dbReference type="InterPro" id="IPR024074">
    <property type="entry name" value="AS_cat/multimer_dom_body"/>
</dbReference>
<dbReference type="InterPro" id="IPR014729">
    <property type="entry name" value="Rossmann-like_a/b/a_fold"/>
</dbReference>
<dbReference type="NCBIfam" id="TIGR00032">
    <property type="entry name" value="argG"/>
    <property type="match status" value="1"/>
</dbReference>
<dbReference type="NCBIfam" id="NF001770">
    <property type="entry name" value="PRK00509.1"/>
    <property type="match status" value="1"/>
</dbReference>
<dbReference type="PANTHER" id="PTHR11587">
    <property type="entry name" value="ARGININOSUCCINATE SYNTHASE"/>
    <property type="match status" value="1"/>
</dbReference>
<dbReference type="PANTHER" id="PTHR11587:SF2">
    <property type="entry name" value="ARGININOSUCCINATE SYNTHASE"/>
    <property type="match status" value="1"/>
</dbReference>
<dbReference type="Pfam" id="PF20979">
    <property type="entry name" value="Arginosuc_syn_C"/>
    <property type="match status" value="1"/>
</dbReference>
<dbReference type="Pfam" id="PF00764">
    <property type="entry name" value="Arginosuc_synth"/>
    <property type="match status" value="1"/>
</dbReference>
<dbReference type="SUPFAM" id="SSF52402">
    <property type="entry name" value="Adenine nucleotide alpha hydrolases-like"/>
    <property type="match status" value="1"/>
</dbReference>
<dbReference type="SUPFAM" id="SSF69864">
    <property type="entry name" value="Argininosuccinate synthetase, C-terminal domain"/>
    <property type="match status" value="1"/>
</dbReference>
<dbReference type="PROSITE" id="PS00564">
    <property type="entry name" value="ARGININOSUCCIN_SYN_1"/>
    <property type="match status" value="1"/>
</dbReference>
<dbReference type="PROSITE" id="PS00565">
    <property type="entry name" value="ARGININOSUCCIN_SYN_2"/>
    <property type="match status" value="1"/>
</dbReference>
<evidence type="ECO:0000255" key="1">
    <source>
        <dbReference type="HAMAP-Rule" id="MF_00005"/>
    </source>
</evidence>
<evidence type="ECO:0000305" key="2"/>
<organism>
    <name type="scientific">Lactococcus lactis subsp. cremoris (strain MG1363)</name>
    <dbReference type="NCBI Taxonomy" id="416870"/>
    <lineage>
        <taxon>Bacteria</taxon>
        <taxon>Bacillati</taxon>
        <taxon>Bacillota</taxon>
        <taxon>Bacilli</taxon>
        <taxon>Lactobacillales</taxon>
        <taxon>Streptococcaceae</taxon>
        <taxon>Lactococcus</taxon>
        <taxon>Lactococcus cremoris subsp. cremoris</taxon>
    </lineage>
</organism>
<feature type="chain" id="PRO_0000148601" description="Argininosuccinate synthase">
    <location>
        <begin position="1"/>
        <end position="397"/>
    </location>
</feature>
<feature type="binding site" evidence="1">
    <location>
        <begin position="9"/>
        <end position="17"/>
    </location>
    <ligand>
        <name>ATP</name>
        <dbReference type="ChEBI" id="CHEBI:30616"/>
    </ligand>
</feature>
<feature type="binding site" evidence="1">
    <location>
        <position position="86"/>
    </location>
    <ligand>
        <name>L-citrulline</name>
        <dbReference type="ChEBI" id="CHEBI:57743"/>
    </ligand>
</feature>
<feature type="binding site" evidence="1">
    <location>
        <position position="116"/>
    </location>
    <ligand>
        <name>ATP</name>
        <dbReference type="ChEBI" id="CHEBI:30616"/>
    </ligand>
</feature>
<feature type="binding site" evidence="1">
    <location>
        <position position="118"/>
    </location>
    <ligand>
        <name>L-aspartate</name>
        <dbReference type="ChEBI" id="CHEBI:29991"/>
    </ligand>
</feature>
<feature type="binding site" evidence="1">
    <location>
        <position position="122"/>
    </location>
    <ligand>
        <name>L-aspartate</name>
        <dbReference type="ChEBI" id="CHEBI:29991"/>
    </ligand>
</feature>
<feature type="binding site" evidence="1">
    <location>
        <position position="122"/>
    </location>
    <ligand>
        <name>L-citrulline</name>
        <dbReference type="ChEBI" id="CHEBI:57743"/>
    </ligand>
</feature>
<feature type="binding site" evidence="1">
    <location>
        <position position="123"/>
    </location>
    <ligand>
        <name>L-aspartate</name>
        <dbReference type="ChEBI" id="CHEBI:29991"/>
    </ligand>
</feature>
<feature type="binding site" evidence="1">
    <location>
        <position position="126"/>
    </location>
    <ligand>
        <name>L-citrulline</name>
        <dbReference type="ChEBI" id="CHEBI:57743"/>
    </ligand>
</feature>
<feature type="binding site" evidence="1">
    <location>
        <position position="174"/>
    </location>
    <ligand>
        <name>L-citrulline</name>
        <dbReference type="ChEBI" id="CHEBI:57743"/>
    </ligand>
</feature>
<feature type="binding site" evidence="1">
    <location>
        <position position="259"/>
    </location>
    <ligand>
        <name>L-citrulline</name>
        <dbReference type="ChEBI" id="CHEBI:57743"/>
    </ligand>
</feature>
<feature type="binding site" evidence="1">
    <location>
        <position position="271"/>
    </location>
    <ligand>
        <name>L-citrulline</name>
        <dbReference type="ChEBI" id="CHEBI:57743"/>
    </ligand>
</feature>
<gene>
    <name evidence="1" type="primary">argG</name>
    <name type="ordered locus">llmg_0138</name>
</gene>
<keyword id="KW-0028">Amino-acid biosynthesis</keyword>
<keyword id="KW-0055">Arginine biosynthesis</keyword>
<keyword id="KW-0067">ATP-binding</keyword>
<keyword id="KW-0963">Cytoplasm</keyword>
<keyword id="KW-0436">Ligase</keyword>
<keyword id="KW-0547">Nucleotide-binding</keyword>
<proteinExistence type="inferred from homology"/>
<accession>Q59491</accession>
<accession>A2RHK9</accession>
<comment type="catalytic activity">
    <reaction evidence="1">
        <text>L-citrulline + L-aspartate + ATP = 2-(N(omega)-L-arginino)succinate + AMP + diphosphate + H(+)</text>
        <dbReference type="Rhea" id="RHEA:10932"/>
        <dbReference type="ChEBI" id="CHEBI:15378"/>
        <dbReference type="ChEBI" id="CHEBI:29991"/>
        <dbReference type="ChEBI" id="CHEBI:30616"/>
        <dbReference type="ChEBI" id="CHEBI:33019"/>
        <dbReference type="ChEBI" id="CHEBI:57472"/>
        <dbReference type="ChEBI" id="CHEBI:57743"/>
        <dbReference type="ChEBI" id="CHEBI:456215"/>
        <dbReference type="EC" id="6.3.4.5"/>
    </reaction>
</comment>
<comment type="pathway">
    <text evidence="1">Amino-acid biosynthesis; L-arginine biosynthesis; L-arginine from L-ornithine and carbamoyl phosphate: step 2/3.</text>
</comment>
<comment type="subunit">
    <text evidence="1">Homotetramer.</text>
</comment>
<comment type="subcellular location">
    <subcellularLocation>
        <location evidence="1">Cytoplasm</location>
    </subcellularLocation>
</comment>
<comment type="similarity">
    <text evidence="1">Belongs to the argininosuccinate synthase family. Type 1 subfamily.</text>
</comment>
<comment type="sequence caution" evidence="2">
    <conflict type="erroneous initiation">
        <sequence resource="EMBL-CDS" id="CAL96745"/>
    </conflict>
</comment>